<protein>
    <recommendedName>
        <fullName>Probable indole-3-pyruvate monooxygenase YUCCA3</fullName>
        <ecNumber>1.14.13.168</ecNumber>
    </recommendedName>
    <alternativeName>
        <fullName>Flavin-containing monooxygenase YUCCA3</fullName>
    </alternativeName>
</protein>
<dbReference type="EC" id="1.14.13.168"/>
<dbReference type="EMBL" id="AY057104">
    <property type="protein sequence ID" value="AAL23752.1"/>
    <property type="molecule type" value="Genomic_DNA"/>
</dbReference>
<dbReference type="EMBL" id="AC002376">
    <property type="protein sequence ID" value="AAB80641.1"/>
    <property type="molecule type" value="Genomic_DNA"/>
</dbReference>
<dbReference type="EMBL" id="CP002684">
    <property type="protein sequence ID" value="AEE27721.1"/>
    <property type="molecule type" value="Genomic_DNA"/>
</dbReference>
<dbReference type="EMBL" id="BT011241">
    <property type="protein sequence ID" value="AAR92277.1"/>
    <property type="molecule type" value="mRNA"/>
</dbReference>
<dbReference type="EMBL" id="BT012546">
    <property type="protein sequence ID" value="AAS99690.1"/>
    <property type="molecule type" value="mRNA"/>
</dbReference>
<dbReference type="EMBL" id="AK228766">
    <property type="protein sequence ID" value="BAF00666.1"/>
    <property type="molecule type" value="mRNA"/>
</dbReference>
<dbReference type="PIR" id="G86178">
    <property type="entry name" value="G86178"/>
</dbReference>
<dbReference type="RefSeq" id="NP_171955.1">
    <property type="nucleotide sequence ID" value="NM_100340.4"/>
</dbReference>
<dbReference type="SMR" id="O23024"/>
<dbReference type="STRING" id="3702.O23024"/>
<dbReference type="PaxDb" id="3702-AT1G04610.1"/>
<dbReference type="ProteomicsDB" id="242339"/>
<dbReference type="EnsemblPlants" id="AT1G04610.1">
    <property type="protein sequence ID" value="AT1G04610.1"/>
    <property type="gene ID" value="AT1G04610"/>
</dbReference>
<dbReference type="GeneID" id="839474"/>
<dbReference type="Gramene" id="AT1G04610.1">
    <property type="protein sequence ID" value="AT1G04610.1"/>
    <property type="gene ID" value="AT1G04610"/>
</dbReference>
<dbReference type="KEGG" id="ath:AT1G04610"/>
<dbReference type="Araport" id="AT1G04610"/>
<dbReference type="TAIR" id="AT1G04610">
    <property type="gene designation" value="YUC3"/>
</dbReference>
<dbReference type="eggNOG" id="KOG1399">
    <property type="taxonomic scope" value="Eukaryota"/>
</dbReference>
<dbReference type="HOGENOM" id="CLU_006909_2_0_1"/>
<dbReference type="InParanoid" id="O23024"/>
<dbReference type="OMA" id="IMHACDY"/>
<dbReference type="OrthoDB" id="66881at2759"/>
<dbReference type="PhylomeDB" id="O23024"/>
<dbReference type="UniPathway" id="UPA00151"/>
<dbReference type="PRO" id="PR:O23024"/>
<dbReference type="Proteomes" id="UP000006548">
    <property type="component" value="Chromosome 1"/>
</dbReference>
<dbReference type="ExpressionAtlas" id="O23024">
    <property type="expression patterns" value="baseline and differential"/>
</dbReference>
<dbReference type="GO" id="GO:0050660">
    <property type="term" value="F:flavin adenine dinucleotide binding"/>
    <property type="evidence" value="ECO:0007669"/>
    <property type="project" value="InterPro"/>
</dbReference>
<dbReference type="GO" id="GO:0103075">
    <property type="term" value="F:indole-3-pyruvate monooxygenase activity"/>
    <property type="evidence" value="ECO:0007669"/>
    <property type="project" value="UniProtKB-EC"/>
</dbReference>
<dbReference type="GO" id="GO:0004499">
    <property type="term" value="F:N,N-dimethylaniline monooxygenase activity"/>
    <property type="evidence" value="ECO:0007669"/>
    <property type="project" value="InterPro"/>
</dbReference>
<dbReference type="GO" id="GO:0050661">
    <property type="term" value="F:NADP binding"/>
    <property type="evidence" value="ECO:0007669"/>
    <property type="project" value="InterPro"/>
</dbReference>
<dbReference type="GO" id="GO:0009851">
    <property type="term" value="P:auxin biosynthetic process"/>
    <property type="evidence" value="ECO:0007669"/>
    <property type="project" value="UniProtKB-UniPathway"/>
</dbReference>
<dbReference type="GO" id="GO:0009723">
    <property type="term" value="P:response to ethylene"/>
    <property type="evidence" value="ECO:0000270"/>
    <property type="project" value="TAIR"/>
</dbReference>
<dbReference type="FunFam" id="3.50.50.60:FF:000100">
    <property type="entry name" value="Flavin-containing monooxygenase"/>
    <property type="match status" value="1"/>
</dbReference>
<dbReference type="Gene3D" id="3.50.50.60">
    <property type="entry name" value="FAD/NAD(P)-binding domain"/>
    <property type="match status" value="1"/>
</dbReference>
<dbReference type="InterPro" id="IPR050982">
    <property type="entry name" value="Auxin_biosynth/cation_transpt"/>
</dbReference>
<dbReference type="InterPro" id="IPR036188">
    <property type="entry name" value="FAD/NAD-bd_sf"/>
</dbReference>
<dbReference type="InterPro" id="IPR020946">
    <property type="entry name" value="Flavin_mOase-like"/>
</dbReference>
<dbReference type="PANTHER" id="PTHR43539">
    <property type="entry name" value="FLAVIN-BINDING MONOOXYGENASE-LIKE PROTEIN (AFU_ORTHOLOGUE AFUA_4G09220)"/>
    <property type="match status" value="1"/>
</dbReference>
<dbReference type="PANTHER" id="PTHR43539:SF86">
    <property type="entry name" value="INDOLE-3-PYRUVATE MONOOXYGENASE YUCCA3-RELATED"/>
    <property type="match status" value="1"/>
</dbReference>
<dbReference type="Pfam" id="PF00743">
    <property type="entry name" value="FMO-like"/>
    <property type="match status" value="1"/>
</dbReference>
<dbReference type="PRINTS" id="PR00368">
    <property type="entry name" value="FADPNR"/>
</dbReference>
<dbReference type="PRINTS" id="PR00469">
    <property type="entry name" value="PNDRDTASEII"/>
</dbReference>
<dbReference type="SUPFAM" id="SSF51905">
    <property type="entry name" value="FAD/NAD(P)-binding domain"/>
    <property type="match status" value="2"/>
</dbReference>
<feature type="chain" id="PRO_0000400070" description="Probable indole-3-pyruvate monooxygenase YUCCA3">
    <location>
        <begin position="1"/>
        <end position="437"/>
    </location>
</feature>
<feature type="binding site" evidence="2">
    <location>
        <begin position="41"/>
        <end position="46"/>
    </location>
    <ligand>
        <name>FAD</name>
        <dbReference type="ChEBI" id="CHEBI:57692"/>
    </ligand>
</feature>
<feature type="binding site" evidence="2">
    <location>
        <begin position="212"/>
        <end position="217"/>
    </location>
    <ligand>
        <name>NADP(+)</name>
        <dbReference type="ChEBI" id="CHEBI:58349"/>
    </ligand>
</feature>
<sequence length="437" mass="48747">MYGNNNKKSINITSMFQNLIPEGSDIFSRRCIWVNGPVIVGAGPSGLAVAAGLKREGVPFIILERANCIASLWQNRTYDRLKLHLPKQFCQLPNYPFPDEFPEYPTKFQFIQYLESYAANFDINPKFNETVQSAKYDETFGLWRVKTISNMGQLGSCEFEYICRWIVVATGENAEKVVPDFEGLEDFGGDVLHAGDYKSGGRYQGKKVLVVGCGNSGMEVSLDLYNHGANPSMVVRSAVHVLPREIFGKSTFELGVTMMKYMPVWLADKTILFLARIILGNTDKYGLKRPKIGPLELKNKEGKTPVLDIGALPKIRSGKIKIVPGIIKFGKGKVELIDGRVLEIDSVILATGYRSNVPSWLKDNDFFSDDGIPKNPFPNGWKGEAGLYAVGFTRKGLFGASLDAMSVAHDIANRWKEESKQQKKTAAARHRRCISHF</sequence>
<keyword id="KW-0073">Auxin biosynthesis</keyword>
<keyword id="KW-0274">FAD</keyword>
<keyword id="KW-0285">Flavoprotein</keyword>
<keyword id="KW-0503">Monooxygenase</keyword>
<keyword id="KW-0521">NADP</keyword>
<keyword id="KW-0560">Oxidoreductase</keyword>
<keyword id="KW-1185">Reference proteome</keyword>
<gene>
    <name type="primary">YUC3</name>
    <name type="synonym">YUCCA3</name>
    <name type="ordered locus">At1g04610</name>
    <name type="ORF">T1G11.14</name>
</gene>
<reference key="1">
    <citation type="journal article" date="2001" name="Science">
        <title>A role for flavin monooxygenase-like enzymes in auxin biosynthesis.</title>
        <authorList>
            <person name="Zhao Y."/>
            <person name="Christensen S.K."/>
            <person name="Fankhauser C."/>
            <person name="Cashman J.R."/>
            <person name="Cohen J.D."/>
            <person name="Weigel D."/>
            <person name="Chory J."/>
        </authorList>
    </citation>
    <scope>NUCLEOTIDE SEQUENCE [GENOMIC DNA]</scope>
</reference>
<reference key="2">
    <citation type="journal article" date="2000" name="Nature">
        <title>Sequence and analysis of chromosome 1 of the plant Arabidopsis thaliana.</title>
        <authorList>
            <person name="Theologis A."/>
            <person name="Ecker J.R."/>
            <person name="Palm C.J."/>
            <person name="Federspiel N.A."/>
            <person name="Kaul S."/>
            <person name="White O."/>
            <person name="Alonso J."/>
            <person name="Altafi H."/>
            <person name="Araujo R."/>
            <person name="Bowman C.L."/>
            <person name="Brooks S.Y."/>
            <person name="Buehler E."/>
            <person name="Chan A."/>
            <person name="Chao Q."/>
            <person name="Chen H."/>
            <person name="Cheuk R.F."/>
            <person name="Chin C.W."/>
            <person name="Chung M.K."/>
            <person name="Conn L."/>
            <person name="Conway A.B."/>
            <person name="Conway A.R."/>
            <person name="Creasy T.H."/>
            <person name="Dewar K."/>
            <person name="Dunn P."/>
            <person name="Etgu P."/>
            <person name="Feldblyum T.V."/>
            <person name="Feng J.-D."/>
            <person name="Fong B."/>
            <person name="Fujii C.Y."/>
            <person name="Gill J.E."/>
            <person name="Goldsmith A.D."/>
            <person name="Haas B."/>
            <person name="Hansen N.F."/>
            <person name="Hughes B."/>
            <person name="Huizar L."/>
            <person name="Hunter J.L."/>
            <person name="Jenkins J."/>
            <person name="Johnson-Hopson C."/>
            <person name="Khan S."/>
            <person name="Khaykin E."/>
            <person name="Kim C.J."/>
            <person name="Koo H.L."/>
            <person name="Kremenetskaia I."/>
            <person name="Kurtz D.B."/>
            <person name="Kwan A."/>
            <person name="Lam B."/>
            <person name="Langin-Hooper S."/>
            <person name="Lee A."/>
            <person name="Lee J.M."/>
            <person name="Lenz C.A."/>
            <person name="Li J.H."/>
            <person name="Li Y.-P."/>
            <person name="Lin X."/>
            <person name="Liu S.X."/>
            <person name="Liu Z.A."/>
            <person name="Luros J.S."/>
            <person name="Maiti R."/>
            <person name="Marziali A."/>
            <person name="Militscher J."/>
            <person name="Miranda M."/>
            <person name="Nguyen M."/>
            <person name="Nierman W.C."/>
            <person name="Osborne B.I."/>
            <person name="Pai G."/>
            <person name="Peterson J."/>
            <person name="Pham P.K."/>
            <person name="Rizzo M."/>
            <person name="Rooney T."/>
            <person name="Rowley D."/>
            <person name="Sakano H."/>
            <person name="Salzberg S.L."/>
            <person name="Schwartz J.R."/>
            <person name="Shinn P."/>
            <person name="Southwick A.M."/>
            <person name="Sun H."/>
            <person name="Tallon L.J."/>
            <person name="Tambunga G."/>
            <person name="Toriumi M.J."/>
            <person name="Town C.D."/>
            <person name="Utterback T."/>
            <person name="Van Aken S."/>
            <person name="Vaysberg M."/>
            <person name="Vysotskaia V.S."/>
            <person name="Walker M."/>
            <person name="Wu D."/>
            <person name="Yu G."/>
            <person name="Fraser C.M."/>
            <person name="Venter J.C."/>
            <person name="Davis R.W."/>
        </authorList>
    </citation>
    <scope>NUCLEOTIDE SEQUENCE [LARGE SCALE GENOMIC DNA]</scope>
    <source>
        <strain>cv. Columbia</strain>
    </source>
</reference>
<reference key="3">
    <citation type="journal article" date="2017" name="Plant J.">
        <title>Araport11: a complete reannotation of the Arabidopsis thaliana reference genome.</title>
        <authorList>
            <person name="Cheng C.Y."/>
            <person name="Krishnakumar V."/>
            <person name="Chan A.P."/>
            <person name="Thibaud-Nissen F."/>
            <person name="Schobel S."/>
            <person name="Town C.D."/>
        </authorList>
    </citation>
    <scope>GENOME REANNOTATION</scope>
    <source>
        <strain>cv. Columbia</strain>
    </source>
</reference>
<reference key="4">
    <citation type="submission" date="2004-01" db="EMBL/GenBank/DDBJ databases">
        <title>Arabidopsis ORF clones.</title>
        <authorList>
            <person name="Cheuk R."/>
            <person name="Chen H."/>
            <person name="Kim C.J."/>
            <person name="Shinn P."/>
            <person name="Ecker J.R."/>
        </authorList>
    </citation>
    <scope>NUCLEOTIDE SEQUENCE [LARGE SCALE MRNA]</scope>
    <source>
        <strain>cv. Columbia</strain>
    </source>
</reference>
<reference key="5">
    <citation type="submission" date="2004-04" db="EMBL/GenBank/DDBJ databases">
        <title>Arabidopsis ORF Clones.</title>
        <authorList>
            <person name="Kim C.J."/>
            <person name="Chen H."/>
            <person name="Cheuk R."/>
            <person name="Shinn P."/>
            <person name="Ecker J.R."/>
        </authorList>
    </citation>
    <scope>NUCLEOTIDE SEQUENCE [LARGE SCALE MRNA]</scope>
    <source>
        <strain>cv. Columbia</strain>
    </source>
</reference>
<reference key="6">
    <citation type="submission" date="2006-07" db="EMBL/GenBank/DDBJ databases">
        <title>Large-scale analysis of RIKEN Arabidopsis full-length (RAFL) cDNAs.</title>
        <authorList>
            <person name="Totoki Y."/>
            <person name="Seki M."/>
            <person name="Ishida J."/>
            <person name="Nakajima M."/>
            <person name="Enju A."/>
            <person name="Kamiya A."/>
            <person name="Narusaka M."/>
            <person name="Shin-i T."/>
            <person name="Nakagawa M."/>
            <person name="Sakamoto N."/>
            <person name="Oishi K."/>
            <person name="Kohara Y."/>
            <person name="Kobayashi M."/>
            <person name="Toyoda A."/>
            <person name="Sakaki Y."/>
            <person name="Sakurai T."/>
            <person name="Iida K."/>
            <person name="Akiyama K."/>
            <person name="Satou M."/>
            <person name="Toyoda T."/>
            <person name="Konagaya A."/>
            <person name="Carninci P."/>
            <person name="Kawai J."/>
            <person name="Hayashizaki Y."/>
            <person name="Shinozaki K."/>
        </authorList>
    </citation>
    <scope>NUCLEOTIDE SEQUENCE [LARGE SCALE MRNA]</scope>
    <source>
        <strain>cv. Columbia</strain>
    </source>
</reference>
<reference key="7">
    <citation type="journal article" date="2006" name="Genes Dev.">
        <title>Auxin biosynthesis by the YUCCA flavin monooxygenases controls the formation of floral organs and vascular tissues in Arabidopsis.</title>
        <authorList>
            <person name="Cheng Y."/>
            <person name="Dai X."/>
            <person name="Zhao Y."/>
        </authorList>
    </citation>
    <scope>GENE FAMILY</scope>
    <scope>NOMENCLATURE</scope>
</reference>
<reference key="8">
    <citation type="journal article" date="2007" name="Plant J.">
        <title>Identification of a flavin-monooxygenase as the S-oxygenating enzyme in aliphatic glucosinolate biosynthesis in Arabidopsis.</title>
        <authorList>
            <person name="Hansen B.G."/>
            <person name="Kliebenstein D.J."/>
            <person name="Halkier B.A."/>
        </authorList>
    </citation>
    <scope>GENE FAMILY</scope>
    <source>
        <strain>cv. Columbia</strain>
    </source>
</reference>
<reference key="9">
    <citation type="journal article" date="2011" name="Proc. Natl. Acad. Sci. U.S.A.">
        <title>Conversion of tryptophan to indole-3-acetic acid by TRYPTOPHAN AMINOTRANSFERASES OF ARABIDOPSIS and YUCCAs in Arabidopsis.</title>
        <authorList>
            <person name="Won C."/>
            <person name="Shen X."/>
            <person name="Mashiguchi K."/>
            <person name="Zheng Z."/>
            <person name="Dai X."/>
            <person name="Cheng Y."/>
            <person name="Kasahara H."/>
            <person name="Kamiya Y."/>
            <person name="Chory J."/>
            <person name="Zhao Y."/>
        </authorList>
    </citation>
    <scope>FUNCTION</scope>
</reference>
<organism>
    <name type="scientific">Arabidopsis thaliana</name>
    <name type="common">Mouse-ear cress</name>
    <dbReference type="NCBI Taxonomy" id="3702"/>
    <lineage>
        <taxon>Eukaryota</taxon>
        <taxon>Viridiplantae</taxon>
        <taxon>Streptophyta</taxon>
        <taxon>Embryophyta</taxon>
        <taxon>Tracheophyta</taxon>
        <taxon>Spermatophyta</taxon>
        <taxon>Magnoliopsida</taxon>
        <taxon>eudicotyledons</taxon>
        <taxon>Gunneridae</taxon>
        <taxon>Pentapetalae</taxon>
        <taxon>rosids</taxon>
        <taxon>malvids</taxon>
        <taxon>Brassicales</taxon>
        <taxon>Brassicaceae</taxon>
        <taxon>Camelineae</taxon>
        <taxon>Arabidopsis</taxon>
    </lineage>
</organism>
<evidence type="ECO:0000250" key="1"/>
<evidence type="ECO:0000255" key="2"/>
<evidence type="ECO:0000269" key="3">
    <source>
    </source>
</evidence>
<evidence type="ECO:0000305" key="4"/>
<proteinExistence type="evidence at transcript level"/>
<comment type="function">
    <text evidence="3">Involved in auxin biosynthesis. Belongs to the set of redundant YUCCA genes probably responsible for auxin biosynthesis in roots.</text>
</comment>
<comment type="catalytic activity">
    <reaction>
        <text>indole-3-pyruvate + NADPH + O2 + H(+) = (indol-3-yl)acetate + CO2 + NADP(+) + H2O</text>
        <dbReference type="Rhea" id="RHEA:34331"/>
        <dbReference type="ChEBI" id="CHEBI:15377"/>
        <dbReference type="ChEBI" id="CHEBI:15378"/>
        <dbReference type="ChEBI" id="CHEBI:15379"/>
        <dbReference type="ChEBI" id="CHEBI:16526"/>
        <dbReference type="ChEBI" id="CHEBI:17640"/>
        <dbReference type="ChEBI" id="CHEBI:30854"/>
        <dbReference type="ChEBI" id="CHEBI:57783"/>
        <dbReference type="ChEBI" id="CHEBI:58349"/>
        <dbReference type="EC" id="1.14.13.168"/>
    </reaction>
</comment>
<comment type="cofactor">
    <cofactor evidence="1">
        <name>FAD</name>
        <dbReference type="ChEBI" id="CHEBI:57692"/>
    </cofactor>
</comment>
<comment type="pathway">
    <text>Plant hormone metabolism; auxin biosynthesis.</text>
</comment>
<comment type="similarity">
    <text evidence="4">Belongs to the FMO family.</text>
</comment>
<name>YUC3_ARATH</name>
<accession>O23024</accession>